<keyword id="KW-0150">Chloroplast</keyword>
<keyword id="KW-0276">Fatty acid metabolism</keyword>
<keyword id="KW-0436">Ligase</keyword>
<keyword id="KW-0443">Lipid metabolism</keyword>
<keyword id="KW-0934">Plastid</keyword>
<keyword id="KW-1185">Reference proteome</keyword>
<keyword id="KW-0809">Transit peptide</keyword>
<organism>
    <name type="scientific">Arabidopsis thaliana</name>
    <name type="common">Mouse-ear cress</name>
    <dbReference type="NCBI Taxonomy" id="3702"/>
    <lineage>
        <taxon>Eukaryota</taxon>
        <taxon>Viridiplantae</taxon>
        <taxon>Streptophyta</taxon>
        <taxon>Embryophyta</taxon>
        <taxon>Tracheophyta</taxon>
        <taxon>Spermatophyta</taxon>
        <taxon>Magnoliopsida</taxon>
        <taxon>eudicotyledons</taxon>
        <taxon>Gunneridae</taxon>
        <taxon>Pentapetalae</taxon>
        <taxon>rosids</taxon>
        <taxon>malvids</taxon>
        <taxon>Brassicales</taxon>
        <taxon>Brassicaceae</taxon>
        <taxon>Camelineae</taxon>
        <taxon>Arabidopsis</taxon>
    </lineage>
</organism>
<feature type="transit peptide" description="Chloroplast" evidence="2">
    <location>
        <begin position="1"/>
        <end position="47"/>
    </location>
</feature>
<feature type="chain" id="PRO_0000415726" description="Probable acyl-activating enzyme 16, chloroplastic">
    <location>
        <begin position="48"/>
        <end position="722"/>
    </location>
</feature>
<feature type="sequence conflict" description="In Ref. 1; AAM28629." evidence="4" ref="1">
    <original>S</original>
    <variation>C</variation>
    <location>
        <position position="16"/>
    </location>
</feature>
<proteinExistence type="evidence at transcript level"/>
<comment type="function">
    <text evidence="1 3">May be involved in the activation of fatty acids to acyl-carrier-protein.</text>
</comment>
<comment type="subcellular location">
    <subcellularLocation>
        <location>Plastid</location>
        <location>Chloroplast</location>
    </subcellularLocation>
</comment>
<comment type="similarity">
    <text evidence="4">Belongs to the ATP-dependent AMP-binding enzyme family.</text>
</comment>
<protein>
    <recommendedName>
        <fullName>Probable acyl-activating enzyme 16, chloroplastic</fullName>
        <ecNumber>6.2.1.-</ecNumber>
    </recommendedName>
</protein>
<evidence type="ECO:0000250" key="1"/>
<evidence type="ECO:0000255" key="2"/>
<evidence type="ECO:0000269" key="3">
    <source>
    </source>
</evidence>
<evidence type="ECO:0000305" key="4"/>
<gene>
    <name type="primary">AAE16</name>
    <name type="ordered locus">At3g23790</name>
    <name type="ORF">MYM9.14</name>
</gene>
<sequence>MASTSLGASILVSHCSSAPEFQVSGMRLVFGYKAFGCRTSRRGFRVRCESKIQEKELRRCSPFLERLSLPREAALSSNEWKSVPDIWRSSVEKYGDRVAVVDPYHDPPSTFTYRQLEQEILDFVEGLRVVGVKADEKIALFADNSCRWLVADQGIMATGAVNVVRGSRSSVEELLQIYCHSESVALVVDNPEFFNRIAESFSYKAAPKFVILLWGEKSSLVTAGRHTPVYSYNEIKKFGQERRAKFARSNDSGKYEYEYIDPDDIATIMYTSGTTGNPKGVMLTHQNLLHQIRNLSDFVPAEAGERFLSMLPSWHAYERACEYFIFTCGVEQKYTSIRFLKDDLKRYQPHYLISVPLVYETLYSGIQKQISASSPARKFLALTLIKVSLAYTEMKRVYEGLCLTKNQKPPMYIVSLVDWLWARVVAFFLWPLHMLAEKLVHRKIRSSIGITKAGVSGGGSLPMHVDKFFEAIGVNVQNGYGLTETSPVVSARRLRCNVLGSVGHPIKDTEFKIVDHETGTVLPPGSKGIVKVRGPPVMKGYYKNPLATKQVIDDDGWFNTGDMGWITPQHSTGRSRSCGGVIVLEGRAKDTIVLSTGENVEPLEIEEAAMRSNLIQQIVVIGQDQRRLGAIVIPNKEAAEGAAKQKISPVDSEVNELSKETITSMVYEELRKWTSQCSFQVGPVLIVDEPFTIDNGLMTPTMKIRRDKVVDQYKNEIERLYK</sequence>
<reference key="1">
    <citation type="journal article" date="2002" name="Plant Physiol.">
        <title>Arabidopsis contains nine long-chain acyl-coenzyme A synthetase genes that participate in fatty acid and glycerolipid metabolism.</title>
        <authorList>
            <person name="Shockey J.M."/>
            <person name="Fulda M.S."/>
            <person name="Browse J.A."/>
        </authorList>
    </citation>
    <scope>NUCLEOTIDE SEQUENCE [MRNA]</scope>
</reference>
<reference key="2">
    <citation type="journal article" date="2000" name="DNA Res.">
        <title>Structural analysis of Arabidopsis thaliana chromosome 3. II. Sequence features of the 4,251,695 bp regions covered by 90 P1, TAC and BAC clones.</title>
        <authorList>
            <person name="Kaneko T."/>
            <person name="Katoh T."/>
            <person name="Sato S."/>
            <person name="Nakamura Y."/>
            <person name="Asamizu E."/>
            <person name="Tabata S."/>
        </authorList>
    </citation>
    <scope>NUCLEOTIDE SEQUENCE [LARGE SCALE GENOMIC DNA]</scope>
    <source>
        <strain>cv. Columbia</strain>
    </source>
</reference>
<reference key="3">
    <citation type="journal article" date="2017" name="Plant J.">
        <title>Araport11: a complete reannotation of the Arabidopsis thaliana reference genome.</title>
        <authorList>
            <person name="Cheng C.Y."/>
            <person name="Krishnakumar V."/>
            <person name="Chan A.P."/>
            <person name="Thibaud-Nissen F."/>
            <person name="Schobel S."/>
            <person name="Town C.D."/>
        </authorList>
    </citation>
    <scope>GENOME REANNOTATION</scope>
    <source>
        <strain>cv. Columbia</strain>
    </source>
</reference>
<reference key="4">
    <citation type="journal article" date="2003" name="Plant Physiol.">
        <title>Arabidopsis contains a large superfamily of acyl-activating enzymes. Phylogenetic and biochemical analysis reveals a new class of acyl-coenzyme a synthetases.</title>
        <authorList>
            <person name="Shockey J.M."/>
            <person name="Fulda M.S."/>
            <person name="Browse J."/>
        </authorList>
    </citation>
    <scope>GENE FAMILY</scope>
    <scope>NOMENCLATURE</scope>
</reference>
<reference key="5">
    <citation type="journal article" date="2005" name="Plant J.">
        <title>Identification of a plastid acyl-acyl carrier protein synthetase in Arabidopsis and its role in the activation and elongation of exogenous fatty acids.</title>
        <authorList>
            <person name="Koo A.J."/>
            <person name="Fulda M."/>
            <person name="Browse J."/>
            <person name="Ohlrogge J.B."/>
        </authorList>
    </citation>
    <scope>FUNCTION</scope>
</reference>
<dbReference type="EC" id="6.2.1.-"/>
<dbReference type="EMBL" id="AF503771">
    <property type="protein sequence ID" value="AAM28629.1"/>
    <property type="molecule type" value="mRNA"/>
</dbReference>
<dbReference type="EMBL" id="AP000377">
    <property type="protein sequence ID" value="BAB01855.1"/>
    <property type="molecule type" value="Genomic_DNA"/>
</dbReference>
<dbReference type="EMBL" id="CP002686">
    <property type="protein sequence ID" value="AEE76814.1"/>
    <property type="molecule type" value="Genomic_DNA"/>
</dbReference>
<dbReference type="RefSeq" id="NP_189021.2">
    <property type="nucleotide sequence ID" value="NM_113283.4"/>
</dbReference>
<dbReference type="SMR" id="Q9LK39"/>
<dbReference type="FunCoup" id="Q9LK39">
    <property type="interactions" value="158"/>
</dbReference>
<dbReference type="STRING" id="3702.Q9LK39"/>
<dbReference type="iPTMnet" id="Q9LK39"/>
<dbReference type="PaxDb" id="3702-AT3G23790.1"/>
<dbReference type="ProteomicsDB" id="244519"/>
<dbReference type="EnsemblPlants" id="AT3G23790.1">
    <property type="protein sequence ID" value="AT3G23790.1"/>
    <property type="gene ID" value="AT3G23790"/>
</dbReference>
<dbReference type="GeneID" id="821961"/>
<dbReference type="Gramene" id="AT3G23790.1">
    <property type="protein sequence ID" value="AT3G23790.1"/>
    <property type="gene ID" value="AT3G23790"/>
</dbReference>
<dbReference type="KEGG" id="ath:AT3G23790"/>
<dbReference type="Araport" id="AT3G23790"/>
<dbReference type="TAIR" id="AT3G23790">
    <property type="gene designation" value="AAE16"/>
</dbReference>
<dbReference type="eggNOG" id="KOG1256">
    <property type="taxonomic scope" value="Eukaryota"/>
</dbReference>
<dbReference type="HOGENOM" id="CLU_000022_45_5_1"/>
<dbReference type="InParanoid" id="Q9LK39"/>
<dbReference type="OMA" id="MEAKRIY"/>
<dbReference type="PhylomeDB" id="Q9LK39"/>
<dbReference type="BioCyc" id="ARA:AT3G23790-MONOMER"/>
<dbReference type="PRO" id="PR:Q9LK39"/>
<dbReference type="Proteomes" id="UP000006548">
    <property type="component" value="Chromosome 3"/>
</dbReference>
<dbReference type="ExpressionAtlas" id="Q9LK39">
    <property type="expression patterns" value="baseline and differential"/>
</dbReference>
<dbReference type="GO" id="GO:0009941">
    <property type="term" value="C:chloroplast envelope"/>
    <property type="evidence" value="ECO:0007005"/>
    <property type="project" value="TAIR"/>
</dbReference>
<dbReference type="GO" id="GO:0016874">
    <property type="term" value="F:ligase activity"/>
    <property type="evidence" value="ECO:0007669"/>
    <property type="project" value="UniProtKB-KW"/>
</dbReference>
<dbReference type="GO" id="GO:0006633">
    <property type="term" value="P:fatty acid biosynthetic process"/>
    <property type="evidence" value="ECO:0000316"/>
    <property type="project" value="TAIR"/>
</dbReference>
<dbReference type="CDD" id="cd17640">
    <property type="entry name" value="LC_FACS_like"/>
    <property type="match status" value="1"/>
</dbReference>
<dbReference type="FunFam" id="3.40.50.12780:FF:000095">
    <property type="entry name" value="Acyl-activating enzyme 15"/>
    <property type="match status" value="1"/>
</dbReference>
<dbReference type="FunFam" id="2.30.38.10:FF:000006">
    <property type="entry name" value="Long-chain-fatty-acid--[acyl-carrier-protein] ligase AEE15, chloroplastic"/>
    <property type="match status" value="1"/>
</dbReference>
<dbReference type="FunFam" id="3.30.300.30:FF:000044">
    <property type="entry name" value="Long-chain-fatty-acid--[acyl-carrier-protein] ligase AEE15, chloroplastic"/>
    <property type="match status" value="1"/>
</dbReference>
<dbReference type="Gene3D" id="3.30.300.30">
    <property type="match status" value="1"/>
</dbReference>
<dbReference type="Gene3D" id="3.40.50.12780">
    <property type="entry name" value="N-terminal domain of ligase-like"/>
    <property type="match status" value="2"/>
</dbReference>
<dbReference type="InterPro" id="IPR045851">
    <property type="entry name" value="AMP-bd_C_sf"/>
</dbReference>
<dbReference type="InterPro" id="IPR020459">
    <property type="entry name" value="AMP-binding"/>
</dbReference>
<dbReference type="InterPro" id="IPR020845">
    <property type="entry name" value="AMP-binding_CS"/>
</dbReference>
<dbReference type="InterPro" id="IPR000873">
    <property type="entry name" value="AMP-dep_synth/lig_dom"/>
</dbReference>
<dbReference type="InterPro" id="IPR042099">
    <property type="entry name" value="ANL_N_sf"/>
</dbReference>
<dbReference type="InterPro" id="IPR052987">
    <property type="entry name" value="Chloroplast_AMP-bd_Enzymes"/>
</dbReference>
<dbReference type="PANTHER" id="PTHR43813">
    <property type="entry name" value="ACYL-ACTIVATING ENZYME 16, CHLOROPLASTIC-RELATED"/>
    <property type="match status" value="1"/>
</dbReference>
<dbReference type="PANTHER" id="PTHR43813:SF1">
    <property type="entry name" value="ACYL-ACTIVATING ENZYME 16, CHLOROPLASTIC-RELATED"/>
    <property type="match status" value="1"/>
</dbReference>
<dbReference type="Pfam" id="PF00501">
    <property type="entry name" value="AMP-binding"/>
    <property type="match status" value="1"/>
</dbReference>
<dbReference type="Pfam" id="PF23562">
    <property type="entry name" value="AMP-binding_C_3"/>
    <property type="match status" value="1"/>
</dbReference>
<dbReference type="PRINTS" id="PR00154">
    <property type="entry name" value="AMPBINDING"/>
</dbReference>
<dbReference type="SUPFAM" id="SSF56801">
    <property type="entry name" value="Acetyl-CoA synthetase-like"/>
    <property type="match status" value="1"/>
</dbReference>
<dbReference type="PROSITE" id="PS00455">
    <property type="entry name" value="AMP_BINDING"/>
    <property type="match status" value="1"/>
</dbReference>
<accession>Q9LK39</accession>
<accession>Q8LRT1</accession>
<name>AAE16_ARATH</name>